<name>C1GTB_DANRE</name>
<reference key="1">
    <citation type="submission" date="2003-07" db="EMBL/GenBank/DDBJ databases">
        <authorList>
            <consortium name="NIH - Zebrafish Gene Collection (ZGC) project"/>
        </authorList>
    </citation>
    <scope>NUCLEOTIDE SEQUENCE [LARGE SCALE MRNA]</scope>
    <source>
        <strain>AB</strain>
    </source>
</reference>
<feature type="chain" id="PRO_0000285068" description="Glycoprotein-N-acetylgalactosamine 3-beta-galactosyltransferase 1-B">
    <location>
        <begin position="1"/>
        <end position="374"/>
    </location>
</feature>
<feature type="topological domain" description="Cytoplasmic" evidence="5">
    <location>
        <begin position="1"/>
        <end position="8"/>
    </location>
</feature>
<feature type="transmembrane region" description="Helical; Signal-anchor for type II membrane protein" evidence="5">
    <location>
        <begin position="9"/>
        <end position="25"/>
    </location>
</feature>
<feature type="topological domain" description="Lumenal" evidence="5">
    <location>
        <begin position="26"/>
        <end position="374"/>
    </location>
</feature>
<feature type="region of interest" description="Disordered" evidence="6">
    <location>
        <begin position="355"/>
        <end position="374"/>
    </location>
</feature>
<feature type="binding site" evidence="2">
    <location>
        <position position="94"/>
    </location>
    <ligand>
        <name>UDP</name>
        <dbReference type="ChEBI" id="CHEBI:58223"/>
    </ligand>
</feature>
<feature type="binding site" evidence="2">
    <location>
        <position position="138"/>
    </location>
    <ligand>
        <name>UDP</name>
        <dbReference type="ChEBI" id="CHEBI:58223"/>
    </ligand>
</feature>
<feature type="binding site" evidence="2">
    <location>
        <position position="139"/>
    </location>
    <ligand>
        <name>UDP</name>
        <dbReference type="ChEBI" id="CHEBI:58223"/>
    </ligand>
</feature>
<feature type="binding site" evidence="2">
    <location>
        <position position="140"/>
    </location>
    <ligand>
        <name>UDP</name>
        <dbReference type="ChEBI" id="CHEBI:58223"/>
    </ligand>
</feature>
<feature type="binding site" evidence="2">
    <location>
        <position position="146"/>
    </location>
    <ligand>
        <name>UDP</name>
        <dbReference type="ChEBI" id="CHEBI:58223"/>
    </ligand>
</feature>
<feature type="binding site" evidence="2">
    <location>
        <position position="169"/>
    </location>
    <ligand>
        <name>Mn(2+)</name>
        <dbReference type="ChEBI" id="CHEBI:29035"/>
    </ligand>
</feature>
<feature type="binding site" evidence="2">
    <location>
        <position position="169"/>
    </location>
    <ligand>
        <name>UDP</name>
        <dbReference type="ChEBI" id="CHEBI:58223"/>
    </ligand>
</feature>
<feature type="binding site" evidence="2">
    <location>
        <position position="171"/>
    </location>
    <ligand>
        <name>Mn(2+)</name>
        <dbReference type="ChEBI" id="CHEBI:29035"/>
    </ligand>
</feature>
<feature type="binding site" evidence="2">
    <location>
        <position position="284"/>
    </location>
    <ligand>
        <name>a glycoprotein</name>
        <dbReference type="ChEBI" id="CHEBI:17089"/>
    </ligand>
</feature>
<feature type="binding site" evidence="2">
    <location>
        <position position="308"/>
    </location>
    <ligand>
        <name>Mn(2+)</name>
        <dbReference type="ChEBI" id="CHEBI:29035"/>
    </ligand>
</feature>
<feature type="binding site" evidence="2">
    <location>
        <position position="308"/>
    </location>
    <ligand>
        <name>UDP</name>
        <dbReference type="ChEBI" id="CHEBI:58223"/>
    </ligand>
</feature>
<feature type="binding site" evidence="2">
    <location>
        <position position="309"/>
    </location>
    <ligand>
        <name>UDP</name>
        <dbReference type="ChEBI" id="CHEBI:58223"/>
    </ligand>
</feature>
<feature type="disulfide bond" evidence="2">
    <location>
        <begin position="91"/>
        <end position="115"/>
    </location>
</feature>
<feature type="disulfide bond" evidence="2">
    <location>
        <begin position="232"/>
        <end position="246"/>
    </location>
</feature>
<feature type="disulfide bond" evidence="2">
    <location>
        <begin position="299"/>
        <end position="300"/>
    </location>
</feature>
<organism>
    <name type="scientific">Danio rerio</name>
    <name type="common">Zebrafish</name>
    <name type="synonym">Brachydanio rerio</name>
    <dbReference type="NCBI Taxonomy" id="7955"/>
    <lineage>
        <taxon>Eukaryota</taxon>
        <taxon>Metazoa</taxon>
        <taxon>Chordata</taxon>
        <taxon>Craniata</taxon>
        <taxon>Vertebrata</taxon>
        <taxon>Euteleostomi</taxon>
        <taxon>Actinopterygii</taxon>
        <taxon>Neopterygii</taxon>
        <taxon>Teleostei</taxon>
        <taxon>Ostariophysi</taxon>
        <taxon>Cypriniformes</taxon>
        <taxon>Danionidae</taxon>
        <taxon>Danioninae</taxon>
        <taxon>Danio</taxon>
    </lineage>
</organism>
<sequence length="374" mass="43454">MKALGARSAFYVGFLVGTCSLYLLLRQAGFTRDSGSREPGTHDKTLLEMLEEENKNWKKERSALFNLNHPHHTGEDGALADSLYKRVRILCWVMTGPDNLEKKARHVKATWSRHCNIVVFISSVDNPDFPTVGLNTKEGRDQLYWKTIRAFHYVMEKHSDEADWFLKADDDTYVIVDNLRWILARHSPEDPVYFGRRFKPYVKQGYMSGGAGYVLSKEALRRFVEGFRTKVCTHTTSVEDLAMGQCMEKIGVKAGDSRDTMQRETFHPFVPESHLTGTFPKTFWYWNYCYYPIVQGPQCCSDLAVSFHYVDASHMYLLEYYTYHLRAFGYKYRYQPPEPNVKAPEKVETRVLEQKDKVEAQEEENQSPELNDKL</sequence>
<gene>
    <name type="primary">c1galt1lb</name>
    <name type="synonym">c1galt1</name>
    <name type="synonym">c1galt1b</name>
    <name type="ORF">zgc:66485</name>
</gene>
<comment type="function">
    <text evidence="4">Glycosyltransferase that generates the core 1 O-glycan Gal-beta1-3GalNAc-alpha1-Ser/Thr (T antigen), which is a precursor for many extended O-glycans in glycoproteins.</text>
</comment>
<comment type="catalytic activity">
    <reaction evidence="4">
        <text>an N-acetyl-alpha-D-galactosaminyl derivative + UDP-alpha-D-galactose = a beta-D-galactosyl-(1-&gt;3)-N-acetyl-alpha-D-galactosaminyl derivative + UDP + H(+)</text>
        <dbReference type="Rhea" id="RHEA:15621"/>
        <dbReference type="ChEBI" id="CHEBI:15378"/>
        <dbReference type="ChEBI" id="CHEBI:28257"/>
        <dbReference type="ChEBI" id="CHEBI:58223"/>
        <dbReference type="ChEBI" id="CHEBI:66914"/>
        <dbReference type="ChEBI" id="CHEBI:133470"/>
        <dbReference type="EC" id="2.4.1.122"/>
    </reaction>
</comment>
<comment type="cofactor">
    <cofactor evidence="3">
        <name>Mn(2+)</name>
        <dbReference type="ChEBI" id="CHEBI:29035"/>
    </cofactor>
</comment>
<comment type="pathway">
    <text evidence="4">Protein modification; protein glycosylation.</text>
</comment>
<comment type="subunit">
    <text evidence="3">Homodimer; disulfide-linked.</text>
</comment>
<comment type="subcellular location">
    <subcellularLocation>
        <location evidence="3">Membrane</location>
        <topology evidence="1">Single-pass type II membrane protein</topology>
    </subcellularLocation>
</comment>
<comment type="similarity">
    <text evidence="7">Belongs to the glycosyltransferase 31 family. Beta3-Gal-T subfamily.</text>
</comment>
<evidence type="ECO:0000250" key="1"/>
<evidence type="ECO:0000250" key="2">
    <source>
        <dbReference type="UniProtKB" id="Q7K237"/>
    </source>
</evidence>
<evidence type="ECO:0000250" key="3">
    <source>
        <dbReference type="UniProtKB" id="Q9JJ05"/>
    </source>
</evidence>
<evidence type="ECO:0000250" key="4">
    <source>
        <dbReference type="UniProtKB" id="Q9NS00"/>
    </source>
</evidence>
<evidence type="ECO:0000255" key="5"/>
<evidence type="ECO:0000256" key="6">
    <source>
        <dbReference type="SAM" id="MobiDB-lite"/>
    </source>
</evidence>
<evidence type="ECO:0000305" key="7"/>
<accession>Q7SYI5</accession>
<protein>
    <recommendedName>
        <fullName>Glycoprotein-N-acetylgalactosamine 3-beta-galactosyltransferase 1-B</fullName>
        <ecNumber evidence="4">2.4.1.122</ecNumber>
    </recommendedName>
    <alternativeName>
        <fullName>Core 1 O-glycan T-synthase B</fullName>
    </alternativeName>
    <alternativeName>
        <fullName>Core 1 UDP-galactose:N-acetylgalactosamine-alpha-R beta 1,3-galactosyltransferase 1-B</fullName>
    </alternativeName>
    <alternativeName>
        <fullName>Core 1 beta1,3-galactosyltransferase 1-B</fullName>
        <shortName>C1GalT1-B</shortName>
        <shortName>Core 1 beta3-Gal-T1-B</shortName>
    </alternativeName>
</protein>
<proteinExistence type="evidence at transcript level"/>
<keyword id="KW-1015">Disulfide bond</keyword>
<keyword id="KW-0328">Glycosyltransferase</keyword>
<keyword id="KW-0464">Manganese</keyword>
<keyword id="KW-0472">Membrane</keyword>
<keyword id="KW-0479">Metal-binding</keyword>
<keyword id="KW-0547">Nucleotide-binding</keyword>
<keyword id="KW-1185">Reference proteome</keyword>
<keyword id="KW-0735">Signal-anchor</keyword>
<keyword id="KW-0808">Transferase</keyword>
<keyword id="KW-0812">Transmembrane</keyword>
<keyword id="KW-1133">Transmembrane helix</keyword>
<dbReference type="EC" id="2.4.1.122" evidence="4"/>
<dbReference type="EMBL" id="BC054714">
    <property type="protein sequence ID" value="AAH54714.1"/>
    <property type="molecule type" value="mRNA"/>
</dbReference>
<dbReference type="RefSeq" id="NP_956345.1">
    <property type="nucleotide sequence ID" value="NM_200051.1"/>
</dbReference>
<dbReference type="SMR" id="Q7SYI5"/>
<dbReference type="FunCoup" id="Q7SYI5">
    <property type="interactions" value="475"/>
</dbReference>
<dbReference type="STRING" id="7955.ENSDARP00000072404"/>
<dbReference type="CAZy" id="GT31">
    <property type="family name" value="Glycosyltransferase Family 31"/>
</dbReference>
<dbReference type="PaxDb" id="7955-ENSDARP00000111673"/>
<dbReference type="GeneID" id="337131"/>
<dbReference type="KEGG" id="dre:337131"/>
<dbReference type="AGR" id="ZFIN:ZDB-GENE-030131-9075"/>
<dbReference type="CTD" id="337131"/>
<dbReference type="ZFIN" id="ZDB-GENE-030131-9075">
    <property type="gene designation" value="c1galt1lb"/>
</dbReference>
<dbReference type="eggNOG" id="KOG2246">
    <property type="taxonomic scope" value="Eukaryota"/>
</dbReference>
<dbReference type="InParanoid" id="Q7SYI5"/>
<dbReference type="OrthoDB" id="414175at2759"/>
<dbReference type="PhylomeDB" id="Q7SYI5"/>
<dbReference type="UniPathway" id="UPA00378"/>
<dbReference type="PRO" id="PR:Q7SYI5"/>
<dbReference type="Proteomes" id="UP000000437">
    <property type="component" value="Alternate scaffold 6"/>
</dbReference>
<dbReference type="Proteomes" id="UP000000437">
    <property type="component" value="Chromosome 6"/>
</dbReference>
<dbReference type="GO" id="GO:0016020">
    <property type="term" value="C:membrane"/>
    <property type="evidence" value="ECO:0000250"/>
    <property type="project" value="UniProtKB"/>
</dbReference>
<dbReference type="GO" id="GO:0016263">
    <property type="term" value="F:glycoprotein-N-acetylgalactosamine 3-beta-galactosyltransferase activity"/>
    <property type="evidence" value="ECO:0000250"/>
    <property type="project" value="UniProtKB"/>
</dbReference>
<dbReference type="GO" id="GO:0046872">
    <property type="term" value="F:metal ion binding"/>
    <property type="evidence" value="ECO:0007669"/>
    <property type="project" value="UniProtKB-KW"/>
</dbReference>
<dbReference type="GO" id="GO:0000166">
    <property type="term" value="F:nucleotide binding"/>
    <property type="evidence" value="ECO:0007669"/>
    <property type="project" value="UniProtKB-KW"/>
</dbReference>
<dbReference type="GO" id="GO:0001525">
    <property type="term" value="P:angiogenesis"/>
    <property type="evidence" value="ECO:0000250"/>
    <property type="project" value="UniProtKB"/>
</dbReference>
<dbReference type="GO" id="GO:0001822">
    <property type="term" value="P:kidney development"/>
    <property type="evidence" value="ECO:0000250"/>
    <property type="project" value="UniProtKB"/>
</dbReference>
<dbReference type="GO" id="GO:0006486">
    <property type="term" value="P:protein glycosylation"/>
    <property type="evidence" value="ECO:0007669"/>
    <property type="project" value="UniProtKB-UniPathway"/>
</dbReference>
<dbReference type="FunFam" id="3.90.550.50:FF:000007">
    <property type="entry name" value="Glycoprotein-N-acetylgalactosamine 3-beta-galactosyltransferase 1"/>
    <property type="match status" value="1"/>
</dbReference>
<dbReference type="Gene3D" id="3.90.550.50">
    <property type="match status" value="1"/>
</dbReference>
<dbReference type="InterPro" id="IPR026050">
    <property type="entry name" value="C1GALT1/C1GALT1_chp1"/>
</dbReference>
<dbReference type="InterPro" id="IPR003378">
    <property type="entry name" value="Fringe-like_glycosylTrfase"/>
</dbReference>
<dbReference type="PANTHER" id="PTHR23033">
    <property type="entry name" value="BETA1,3-GALACTOSYLTRANSFERASE"/>
    <property type="match status" value="1"/>
</dbReference>
<dbReference type="PANTHER" id="PTHR23033:SF45">
    <property type="entry name" value="GLYCOPROTEIN-N-ACETYLGALACTOSAMINE 3-BETA-GALACTOSYLTRANSFERASE 1-B"/>
    <property type="match status" value="1"/>
</dbReference>
<dbReference type="Pfam" id="PF02434">
    <property type="entry name" value="Fringe"/>
    <property type="match status" value="1"/>
</dbReference>